<proteinExistence type="evidence at protein level"/>
<reference key="1">
    <citation type="journal article" date="1998" name="Nature">
        <title>Deciphering the biology of Mycobacterium tuberculosis from the complete genome sequence.</title>
        <authorList>
            <person name="Cole S.T."/>
            <person name="Brosch R."/>
            <person name="Parkhill J."/>
            <person name="Garnier T."/>
            <person name="Churcher C.M."/>
            <person name="Harris D.E."/>
            <person name="Gordon S.V."/>
            <person name="Eiglmeier K."/>
            <person name="Gas S."/>
            <person name="Barry C.E. III"/>
            <person name="Tekaia F."/>
            <person name="Badcock K."/>
            <person name="Basham D."/>
            <person name="Brown D."/>
            <person name="Chillingworth T."/>
            <person name="Connor R."/>
            <person name="Davies R.M."/>
            <person name="Devlin K."/>
            <person name="Feltwell T."/>
            <person name="Gentles S."/>
            <person name="Hamlin N."/>
            <person name="Holroyd S."/>
            <person name="Hornsby T."/>
            <person name="Jagels K."/>
            <person name="Krogh A."/>
            <person name="McLean J."/>
            <person name="Moule S."/>
            <person name="Murphy L.D."/>
            <person name="Oliver S."/>
            <person name="Osborne J."/>
            <person name="Quail M.A."/>
            <person name="Rajandream M.A."/>
            <person name="Rogers J."/>
            <person name="Rutter S."/>
            <person name="Seeger K."/>
            <person name="Skelton S."/>
            <person name="Squares S."/>
            <person name="Squares R."/>
            <person name="Sulston J.E."/>
            <person name="Taylor K."/>
            <person name="Whitehead S."/>
            <person name="Barrell B.G."/>
        </authorList>
    </citation>
    <scope>NUCLEOTIDE SEQUENCE [LARGE SCALE GENOMIC DNA]</scope>
    <source>
        <strain>ATCC 25618 / H37Rv</strain>
    </source>
</reference>
<reference key="2">
    <citation type="journal article" date="2011" name="Mol. Cell. Proteomics">
        <title>Proteogenomic analysis of Mycobacterium tuberculosis by high resolution mass spectrometry.</title>
        <authorList>
            <person name="Kelkar D.S."/>
            <person name="Kumar D."/>
            <person name="Kumar P."/>
            <person name="Balakrishnan L."/>
            <person name="Muthusamy B."/>
            <person name="Yadav A.K."/>
            <person name="Shrivastava P."/>
            <person name="Marimuthu A."/>
            <person name="Anand S."/>
            <person name="Sundaram H."/>
            <person name="Kingsbury R."/>
            <person name="Harsha H.C."/>
            <person name="Nair B."/>
            <person name="Prasad T.S."/>
            <person name="Chauhan D.S."/>
            <person name="Katoch K."/>
            <person name="Katoch V.M."/>
            <person name="Kumar P."/>
            <person name="Chaerkady R."/>
            <person name="Ramachandran S."/>
            <person name="Dash D."/>
            <person name="Pandey A."/>
        </authorList>
    </citation>
    <scope>IDENTIFICATION BY MASS SPECTROMETRY [LARGE SCALE ANALYSIS]</scope>
    <source>
        <strain>ATCC 25618 / H37Rv</strain>
    </source>
</reference>
<keyword id="KW-0169">Cobalamin biosynthesis</keyword>
<keyword id="KW-0489">Methyltransferase</keyword>
<keyword id="KW-1185">Reference proteome</keyword>
<keyword id="KW-0949">S-adenosyl-L-methionine</keyword>
<keyword id="KW-0808">Transferase</keyword>
<accession>P9WGB1</accession>
<accession>L0TB96</accession>
<accession>Q10672</accession>
<feature type="chain" id="PRO_0000150396" description="Precorrin-4 C(11)-methyltransferase">
    <location>
        <begin position="1"/>
        <end position="251"/>
    </location>
</feature>
<organism>
    <name type="scientific">Mycobacterium tuberculosis (strain ATCC 25618 / H37Rv)</name>
    <dbReference type="NCBI Taxonomy" id="83332"/>
    <lineage>
        <taxon>Bacteria</taxon>
        <taxon>Bacillati</taxon>
        <taxon>Actinomycetota</taxon>
        <taxon>Actinomycetes</taxon>
        <taxon>Mycobacteriales</taxon>
        <taxon>Mycobacteriaceae</taxon>
        <taxon>Mycobacterium</taxon>
        <taxon>Mycobacterium tuberculosis complex</taxon>
    </lineage>
</organism>
<protein>
    <recommendedName>
        <fullName>Precorrin-4 C(11)-methyltransferase</fullName>
        <ecNumber>2.1.1.133</ecNumber>
    </recommendedName>
    <alternativeName>
        <fullName>Precorrin-3 methylase</fullName>
    </alternativeName>
</protein>
<sequence>MTVYFIGAGPGAADLITVRGQRLLQRCPVCLYAGSIMPDDLLAQCPPGATIVDTGPLTLEQIVRKLADADADGRDVARLHSGDPSLYSALAEQCRELDALGIGYEIVPGVPAFAAAAAALKRELTVPGVAQTVTLTRVATLSTPIPPGEDLAALARSRATLVLHLAAAQIDAIVPRLLDGGYRPETPVAVVAFASWPQQRTLRGTLADIAARMHDAKITRTAVIVVGDVLTAEGFTDSYLYSVARHGRYAQ</sequence>
<gene>
    <name type="primary">cobM</name>
    <name type="ordered locus">Rv2071c</name>
    <name type="ORF">MTCY49.10c</name>
</gene>
<comment type="function">
    <text evidence="1">Catalyzes the methylation of C-11 in precorrin-4 to form precorrin-5.</text>
</comment>
<comment type="catalytic activity">
    <reaction>
        <text>precorrin-4 + S-adenosyl-L-methionine = precorrin-5 + S-adenosyl-L-homocysteine</text>
        <dbReference type="Rhea" id="RHEA:22012"/>
        <dbReference type="ChEBI" id="CHEBI:57769"/>
        <dbReference type="ChEBI" id="CHEBI:57856"/>
        <dbReference type="ChEBI" id="CHEBI:59789"/>
        <dbReference type="ChEBI" id="CHEBI:77871"/>
        <dbReference type="EC" id="2.1.1.133"/>
    </reaction>
</comment>
<comment type="pathway">
    <text>Cofactor biosynthesis; adenosylcobalamin biosynthesis; cob(II)yrinate a,c-diamide from precorrin-2 (aerobic route): step 4/10.</text>
</comment>
<comment type="similarity">
    <text evidence="2">Belongs to the precorrin methyltransferase family.</text>
</comment>
<dbReference type="EC" id="2.1.1.133"/>
<dbReference type="EMBL" id="AL123456">
    <property type="protein sequence ID" value="CCP44845.1"/>
    <property type="molecule type" value="Genomic_DNA"/>
</dbReference>
<dbReference type="PIR" id="B70765">
    <property type="entry name" value="B70765"/>
</dbReference>
<dbReference type="RefSeq" id="NP_216587.1">
    <property type="nucleotide sequence ID" value="NC_000962.3"/>
</dbReference>
<dbReference type="RefSeq" id="WP_003906733.1">
    <property type="nucleotide sequence ID" value="NZ_NVQJ01000047.1"/>
</dbReference>
<dbReference type="SMR" id="P9WGB1"/>
<dbReference type="FunCoup" id="P9WGB1">
    <property type="interactions" value="132"/>
</dbReference>
<dbReference type="STRING" id="83332.Rv2071c"/>
<dbReference type="PaxDb" id="83332-Rv2071c"/>
<dbReference type="DNASU" id="888521"/>
<dbReference type="GeneID" id="888521"/>
<dbReference type="KEGG" id="mtu:Rv2071c"/>
<dbReference type="KEGG" id="mtv:RVBD_2071c"/>
<dbReference type="TubercuList" id="Rv2071c"/>
<dbReference type="eggNOG" id="COG2875">
    <property type="taxonomic scope" value="Bacteria"/>
</dbReference>
<dbReference type="InParanoid" id="P9WGB1"/>
<dbReference type="OrthoDB" id="9815856at2"/>
<dbReference type="PhylomeDB" id="P9WGB1"/>
<dbReference type="UniPathway" id="UPA00148">
    <property type="reaction ID" value="UER00215"/>
</dbReference>
<dbReference type="Proteomes" id="UP000001584">
    <property type="component" value="Chromosome"/>
</dbReference>
<dbReference type="GO" id="GO:0046026">
    <property type="term" value="F:precorrin-4 C11-methyltransferase activity"/>
    <property type="evidence" value="ECO:0007669"/>
    <property type="project" value="UniProtKB-EC"/>
</dbReference>
<dbReference type="GO" id="GO:0009236">
    <property type="term" value="P:cobalamin biosynthetic process"/>
    <property type="evidence" value="ECO:0007669"/>
    <property type="project" value="UniProtKB-UniPathway"/>
</dbReference>
<dbReference type="GO" id="GO:0032259">
    <property type="term" value="P:methylation"/>
    <property type="evidence" value="ECO:0007669"/>
    <property type="project" value="UniProtKB-KW"/>
</dbReference>
<dbReference type="CDD" id="cd11641">
    <property type="entry name" value="Precorrin-4_C11-MT"/>
    <property type="match status" value="1"/>
</dbReference>
<dbReference type="Gene3D" id="3.40.1010.10">
    <property type="entry name" value="Cobalt-precorrin-4 Transmethylase, Domain 1"/>
    <property type="match status" value="1"/>
</dbReference>
<dbReference type="Gene3D" id="3.30.950.10">
    <property type="entry name" value="Methyltransferase, Cobalt-precorrin-4 Transmethylase, Domain 2"/>
    <property type="match status" value="1"/>
</dbReference>
<dbReference type="InterPro" id="IPR000878">
    <property type="entry name" value="4pyrrol_Mease"/>
</dbReference>
<dbReference type="InterPro" id="IPR035996">
    <property type="entry name" value="4pyrrol_Methylase_sf"/>
</dbReference>
<dbReference type="InterPro" id="IPR014777">
    <property type="entry name" value="4pyrrole_Mease_sub1"/>
</dbReference>
<dbReference type="InterPro" id="IPR014776">
    <property type="entry name" value="4pyrrole_Mease_sub2"/>
</dbReference>
<dbReference type="InterPro" id="IPR006362">
    <property type="entry name" value="Cbl_synth_CobM/CibF"/>
</dbReference>
<dbReference type="InterPro" id="IPR050161">
    <property type="entry name" value="Siro_Cobalamin_biosynth"/>
</dbReference>
<dbReference type="InterPro" id="IPR003043">
    <property type="entry name" value="Uropor_MeTrfase_CS"/>
</dbReference>
<dbReference type="NCBIfam" id="TIGR01465">
    <property type="entry name" value="cobM_cbiF"/>
    <property type="match status" value="1"/>
</dbReference>
<dbReference type="PANTHER" id="PTHR45790:SF4">
    <property type="entry name" value="COBALT-PRECORRIN-4 C(11)-METHYLTRANSFERASE"/>
    <property type="match status" value="1"/>
</dbReference>
<dbReference type="PANTHER" id="PTHR45790">
    <property type="entry name" value="SIROHEME SYNTHASE-RELATED"/>
    <property type="match status" value="1"/>
</dbReference>
<dbReference type="Pfam" id="PF00590">
    <property type="entry name" value="TP_methylase"/>
    <property type="match status" value="1"/>
</dbReference>
<dbReference type="SUPFAM" id="SSF53790">
    <property type="entry name" value="Tetrapyrrole methylase"/>
    <property type="match status" value="1"/>
</dbReference>
<dbReference type="PROSITE" id="PS00839">
    <property type="entry name" value="SUMT_1"/>
    <property type="match status" value="1"/>
</dbReference>
<dbReference type="PROSITE" id="PS00840">
    <property type="entry name" value="SUMT_2"/>
    <property type="match status" value="1"/>
</dbReference>
<name>COBM_MYCTU</name>
<evidence type="ECO:0000250" key="1"/>
<evidence type="ECO:0000305" key="2"/>